<sequence length="283" mass="33560">MNTNQNKFNLNINITKDELSRLIKIVYNNFGINLSEKKKLLIESRLSSLLKVKGFKNFTEYINFLEKSTGNIQLIELIDKISTNHTYFFRESKHFDFLNNKILPKLTEKILNSENSEIRIWSAGCSSGEEPYTIAMMLKEYMEHNRVNFKVKILATDISISVLNEAREGIYPEDRIINLPKYLKIKYLNQLQDDKFQVKEILKKMVYFKKLNLMDEKFPFSKKFDLIFCRNVMIYFDEKTRNNLANKFNSYLKKDSYLLIGHSETIRGNKNLEYIMPATYKKN</sequence>
<keyword id="KW-0145">Chemotaxis</keyword>
<keyword id="KW-0489">Methyltransferase</keyword>
<keyword id="KW-1185">Reference proteome</keyword>
<keyword id="KW-0949">S-adenosyl-L-methionine</keyword>
<keyword id="KW-0808">Transferase</keyword>
<comment type="function">
    <text evidence="1">Methylation of the membrane-bound methyl-accepting chemotaxis proteins (MCP) to form gamma-glutamyl methyl ester residues in MCP.</text>
</comment>
<comment type="catalytic activity">
    <reaction>
        <text>L-glutamyl-[protein] + S-adenosyl-L-methionine = [protein]-L-glutamate 5-O-methyl ester + S-adenosyl-L-homocysteine</text>
        <dbReference type="Rhea" id="RHEA:24452"/>
        <dbReference type="Rhea" id="RHEA-COMP:10208"/>
        <dbReference type="Rhea" id="RHEA-COMP:10311"/>
        <dbReference type="ChEBI" id="CHEBI:29973"/>
        <dbReference type="ChEBI" id="CHEBI:57856"/>
        <dbReference type="ChEBI" id="CHEBI:59789"/>
        <dbReference type="ChEBI" id="CHEBI:82795"/>
        <dbReference type="EC" id="2.1.1.80"/>
    </reaction>
</comment>
<name>CHER_BORBU</name>
<gene>
    <name type="primary">cheR</name>
    <name type="ordered locus">BB_0040</name>
</gene>
<organism>
    <name type="scientific">Borreliella burgdorferi (strain ATCC 35210 / DSM 4680 / CIP 102532 / B31)</name>
    <name type="common">Borrelia burgdorferi</name>
    <dbReference type="NCBI Taxonomy" id="224326"/>
    <lineage>
        <taxon>Bacteria</taxon>
        <taxon>Pseudomonadati</taxon>
        <taxon>Spirochaetota</taxon>
        <taxon>Spirochaetia</taxon>
        <taxon>Spirochaetales</taxon>
        <taxon>Borreliaceae</taxon>
        <taxon>Borreliella</taxon>
    </lineage>
</organism>
<accession>O51069</accession>
<proteinExistence type="inferred from homology"/>
<evidence type="ECO:0000250" key="1"/>
<evidence type="ECO:0000255" key="2">
    <source>
        <dbReference type="PROSITE-ProRule" id="PRU00051"/>
    </source>
</evidence>
<reference key="1">
    <citation type="journal article" date="1997" name="Nature">
        <title>Genomic sequence of a Lyme disease spirochaete, Borrelia burgdorferi.</title>
        <authorList>
            <person name="Fraser C.M."/>
            <person name="Casjens S."/>
            <person name="Huang W.M."/>
            <person name="Sutton G.G."/>
            <person name="Clayton R.A."/>
            <person name="Lathigra R."/>
            <person name="White O."/>
            <person name="Ketchum K.A."/>
            <person name="Dodson R.J."/>
            <person name="Hickey E.K."/>
            <person name="Gwinn M.L."/>
            <person name="Dougherty B.A."/>
            <person name="Tomb J.-F."/>
            <person name="Fleischmann R.D."/>
            <person name="Richardson D.L."/>
            <person name="Peterson J.D."/>
            <person name="Kerlavage A.R."/>
            <person name="Quackenbush J."/>
            <person name="Salzberg S.L."/>
            <person name="Hanson M."/>
            <person name="van Vugt R."/>
            <person name="Palmer N."/>
            <person name="Adams M.D."/>
            <person name="Gocayne J.D."/>
            <person name="Weidman J.F."/>
            <person name="Utterback T.R."/>
            <person name="Watthey L."/>
            <person name="McDonald L.A."/>
            <person name="Artiach P."/>
            <person name="Bowman C."/>
            <person name="Garland S.A."/>
            <person name="Fujii C."/>
            <person name="Cotton M.D."/>
            <person name="Horst K."/>
            <person name="Roberts K.M."/>
            <person name="Hatch B."/>
            <person name="Smith H.O."/>
            <person name="Venter J.C."/>
        </authorList>
    </citation>
    <scope>NUCLEOTIDE SEQUENCE [LARGE SCALE GENOMIC DNA]</scope>
    <source>
        <strain>ATCC 35210 / DSM 4680 / CIP 102532 / B31</strain>
    </source>
</reference>
<protein>
    <recommendedName>
        <fullName>Chemotaxis protein methyltransferase</fullName>
        <ecNumber>2.1.1.80</ecNumber>
    </recommendedName>
</protein>
<feature type="chain" id="PRO_0000176031" description="Chemotaxis protein methyltransferase">
    <location>
        <begin position="1"/>
        <end position="283"/>
    </location>
</feature>
<feature type="domain" description="CheR-type methyltransferase" evidence="2">
    <location>
        <begin position="7"/>
        <end position="283"/>
    </location>
</feature>
<feature type="binding site" evidence="1">
    <location>
        <position position="84"/>
    </location>
    <ligand>
        <name>S-adenosyl-L-methionine</name>
        <dbReference type="ChEBI" id="CHEBI:59789"/>
    </ligand>
</feature>
<feature type="binding site" evidence="1">
    <location>
        <position position="86"/>
    </location>
    <ligand>
        <name>S-adenosyl-L-methionine</name>
        <dbReference type="ChEBI" id="CHEBI:59789"/>
    </ligand>
</feature>
<feature type="binding site" evidence="1">
    <location>
        <position position="90"/>
    </location>
    <ligand>
        <name>S-adenosyl-L-methionine</name>
        <dbReference type="ChEBI" id="CHEBI:59789"/>
    </ligand>
</feature>
<feature type="binding site" evidence="1">
    <location>
        <position position="130"/>
    </location>
    <ligand>
        <name>S-adenosyl-L-methionine</name>
        <dbReference type="ChEBI" id="CHEBI:59789"/>
    </ligand>
</feature>
<feature type="binding site" evidence="1">
    <location>
        <position position="157"/>
    </location>
    <ligand>
        <name>S-adenosyl-L-methionine</name>
        <dbReference type="ChEBI" id="CHEBI:59789"/>
    </ligand>
</feature>
<feature type="binding site" evidence="1">
    <location>
        <begin position="212"/>
        <end position="213"/>
    </location>
    <ligand>
        <name>S-adenosyl-L-methionine</name>
        <dbReference type="ChEBI" id="CHEBI:59789"/>
    </ligand>
</feature>
<feature type="binding site" evidence="1">
    <location>
        <begin position="230"/>
        <end position="231"/>
    </location>
    <ligand>
        <name>S-adenosyl-L-methionine</name>
        <dbReference type="ChEBI" id="CHEBI:59789"/>
    </ligand>
</feature>
<dbReference type="EC" id="2.1.1.80"/>
<dbReference type="EMBL" id="AE000783">
    <property type="protein sequence ID" value="AAC66439.1"/>
    <property type="molecule type" value="Genomic_DNA"/>
</dbReference>
<dbReference type="PIR" id="H70104">
    <property type="entry name" value="H70104"/>
</dbReference>
<dbReference type="RefSeq" id="NP_212174.1">
    <property type="nucleotide sequence ID" value="NC_001318.1"/>
</dbReference>
<dbReference type="RefSeq" id="WP_002665509.1">
    <property type="nucleotide sequence ID" value="NC_001318.1"/>
</dbReference>
<dbReference type="SMR" id="O51069"/>
<dbReference type="STRING" id="224326.BB_0040"/>
<dbReference type="PaxDb" id="224326-BB_0040"/>
<dbReference type="EnsemblBacteria" id="AAC66439">
    <property type="protein sequence ID" value="AAC66439"/>
    <property type="gene ID" value="BB_0040"/>
</dbReference>
<dbReference type="KEGG" id="bbu:BB_0040"/>
<dbReference type="PATRIC" id="fig|224326.49.peg.439"/>
<dbReference type="HOGENOM" id="CLU_025854_0_0_12"/>
<dbReference type="OrthoDB" id="9816309at2"/>
<dbReference type="Proteomes" id="UP000001807">
    <property type="component" value="Chromosome"/>
</dbReference>
<dbReference type="GO" id="GO:0008983">
    <property type="term" value="F:protein-glutamate O-methyltransferase activity"/>
    <property type="evidence" value="ECO:0007669"/>
    <property type="project" value="UniProtKB-EC"/>
</dbReference>
<dbReference type="GO" id="GO:0006935">
    <property type="term" value="P:chemotaxis"/>
    <property type="evidence" value="ECO:0007669"/>
    <property type="project" value="UniProtKB-KW"/>
</dbReference>
<dbReference type="GO" id="GO:0032259">
    <property type="term" value="P:methylation"/>
    <property type="evidence" value="ECO:0007669"/>
    <property type="project" value="UniProtKB-KW"/>
</dbReference>
<dbReference type="Gene3D" id="1.10.155.10">
    <property type="entry name" value="Chemotaxis receptor methyltransferase CheR, N-terminal domain"/>
    <property type="match status" value="1"/>
</dbReference>
<dbReference type="Gene3D" id="3.40.50.150">
    <property type="entry name" value="Vaccinia Virus protein VP39"/>
    <property type="match status" value="1"/>
</dbReference>
<dbReference type="InterPro" id="IPR050903">
    <property type="entry name" value="Bact_Chemotaxis_MeTrfase"/>
</dbReference>
<dbReference type="InterPro" id="IPR026024">
    <property type="entry name" value="Chemotaxis_MeTrfase_CheR"/>
</dbReference>
<dbReference type="InterPro" id="IPR022642">
    <property type="entry name" value="CheR_C"/>
</dbReference>
<dbReference type="InterPro" id="IPR000780">
    <property type="entry name" value="CheR_MeTrfase"/>
</dbReference>
<dbReference type="InterPro" id="IPR022641">
    <property type="entry name" value="CheR_N"/>
</dbReference>
<dbReference type="InterPro" id="IPR036804">
    <property type="entry name" value="CheR_N_sf"/>
</dbReference>
<dbReference type="InterPro" id="IPR029063">
    <property type="entry name" value="SAM-dependent_MTases_sf"/>
</dbReference>
<dbReference type="PANTHER" id="PTHR24422">
    <property type="entry name" value="CHEMOTAXIS PROTEIN METHYLTRANSFERASE"/>
    <property type="match status" value="1"/>
</dbReference>
<dbReference type="PANTHER" id="PTHR24422:SF19">
    <property type="entry name" value="CHEMOTAXIS PROTEIN METHYLTRANSFERASE"/>
    <property type="match status" value="1"/>
</dbReference>
<dbReference type="Pfam" id="PF01739">
    <property type="entry name" value="CheR"/>
    <property type="match status" value="1"/>
</dbReference>
<dbReference type="Pfam" id="PF03705">
    <property type="entry name" value="CheR_N"/>
    <property type="match status" value="1"/>
</dbReference>
<dbReference type="PIRSF" id="PIRSF000410">
    <property type="entry name" value="CheR"/>
    <property type="match status" value="1"/>
</dbReference>
<dbReference type="PRINTS" id="PR00996">
    <property type="entry name" value="CHERMTFRASE"/>
</dbReference>
<dbReference type="SMART" id="SM00138">
    <property type="entry name" value="MeTrc"/>
    <property type="match status" value="1"/>
</dbReference>
<dbReference type="SUPFAM" id="SSF47757">
    <property type="entry name" value="Chemotaxis receptor methyltransferase CheR, N-terminal domain"/>
    <property type="match status" value="1"/>
</dbReference>
<dbReference type="SUPFAM" id="SSF53335">
    <property type="entry name" value="S-adenosyl-L-methionine-dependent methyltransferases"/>
    <property type="match status" value="1"/>
</dbReference>
<dbReference type="PROSITE" id="PS50123">
    <property type="entry name" value="CHER"/>
    <property type="match status" value="1"/>
</dbReference>